<proteinExistence type="inferred from homology"/>
<sequence length="119" mass="13303">MIVGHGIDLQEMEAIESARIKHQGFPKKILTEKEFERYQSLSGRRQLEYLAGRWSAKEALTKALGTGIGKIGFHDIEILNTSKGVPYVTKSPFDGNIWLSISHSGNFVQASVILEEKDD</sequence>
<feature type="chain" id="PRO_1000008517" description="Holo-[acyl-carrier-protein] synthase">
    <location>
        <begin position="1"/>
        <end position="119"/>
    </location>
</feature>
<feature type="binding site" evidence="1">
    <location>
        <position position="8"/>
    </location>
    <ligand>
        <name>Mg(2+)</name>
        <dbReference type="ChEBI" id="CHEBI:18420"/>
    </ligand>
</feature>
<feature type="binding site" evidence="1">
    <location>
        <position position="58"/>
    </location>
    <ligand>
        <name>Mg(2+)</name>
        <dbReference type="ChEBI" id="CHEBI:18420"/>
    </ligand>
</feature>
<name>ACPS_STRSY</name>
<comment type="function">
    <text evidence="1">Transfers the 4'-phosphopantetheine moiety from coenzyme A to a Ser of acyl-carrier-protein.</text>
</comment>
<comment type="catalytic activity">
    <reaction evidence="1">
        <text>apo-[ACP] + CoA = holo-[ACP] + adenosine 3',5'-bisphosphate + H(+)</text>
        <dbReference type="Rhea" id="RHEA:12068"/>
        <dbReference type="Rhea" id="RHEA-COMP:9685"/>
        <dbReference type="Rhea" id="RHEA-COMP:9690"/>
        <dbReference type="ChEBI" id="CHEBI:15378"/>
        <dbReference type="ChEBI" id="CHEBI:29999"/>
        <dbReference type="ChEBI" id="CHEBI:57287"/>
        <dbReference type="ChEBI" id="CHEBI:58343"/>
        <dbReference type="ChEBI" id="CHEBI:64479"/>
        <dbReference type="EC" id="2.7.8.7"/>
    </reaction>
</comment>
<comment type="cofactor">
    <cofactor evidence="1">
        <name>Mg(2+)</name>
        <dbReference type="ChEBI" id="CHEBI:18420"/>
    </cofactor>
</comment>
<comment type="subcellular location">
    <subcellularLocation>
        <location evidence="1">Cytoplasm</location>
    </subcellularLocation>
</comment>
<comment type="similarity">
    <text evidence="1">Belongs to the P-Pant transferase superfamily. AcpS family.</text>
</comment>
<organism>
    <name type="scientific">Streptococcus suis (strain 05ZYH33)</name>
    <dbReference type="NCBI Taxonomy" id="391295"/>
    <lineage>
        <taxon>Bacteria</taxon>
        <taxon>Bacillati</taxon>
        <taxon>Bacillota</taxon>
        <taxon>Bacilli</taxon>
        <taxon>Lactobacillales</taxon>
        <taxon>Streptococcaceae</taxon>
        <taxon>Streptococcus</taxon>
    </lineage>
</organism>
<reference key="1">
    <citation type="journal article" date="2007" name="PLoS ONE">
        <title>A glimpse of streptococcal toxic shock syndrome from comparative genomics of S. suis 2 Chinese isolates.</title>
        <authorList>
            <person name="Chen C."/>
            <person name="Tang J."/>
            <person name="Dong W."/>
            <person name="Wang C."/>
            <person name="Feng Y."/>
            <person name="Wang J."/>
            <person name="Zheng F."/>
            <person name="Pan X."/>
            <person name="Liu D."/>
            <person name="Li M."/>
            <person name="Song Y."/>
            <person name="Zhu X."/>
            <person name="Sun H."/>
            <person name="Feng T."/>
            <person name="Guo Z."/>
            <person name="Ju A."/>
            <person name="Ge J."/>
            <person name="Dong Y."/>
            <person name="Sun W."/>
            <person name="Jiang Y."/>
            <person name="Wang J."/>
            <person name="Yan J."/>
            <person name="Yang H."/>
            <person name="Wang X."/>
            <person name="Gao G.F."/>
            <person name="Yang R."/>
            <person name="Wang J."/>
            <person name="Yu J."/>
        </authorList>
    </citation>
    <scope>NUCLEOTIDE SEQUENCE [LARGE SCALE GENOMIC DNA]</scope>
    <source>
        <strain>05ZYH33</strain>
    </source>
</reference>
<keyword id="KW-0963">Cytoplasm</keyword>
<keyword id="KW-0275">Fatty acid biosynthesis</keyword>
<keyword id="KW-0276">Fatty acid metabolism</keyword>
<keyword id="KW-0444">Lipid biosynthesis</keyword>
<keyword id="KW-0443">Lipid metabolism</keyword>
<keyword id="KW-0460">Magnesium</keyword>
<keyword id="KW-0479">Metal-binding</keyword>
<keyword id="KW-0808">Transferase</keyword>
<gene>
    <name evidence="1" type="primary">acpS</name>
    <name type="ordered locus">SSU05_1813</name>
</gene>
<protein>
    <recommendedName>
        <fullName evidence="1">Holo-[acyl-carrier-protein] synthase</fullName>
        <shortName evidence="1">Holo-ACP synthase</shortName>
        <ecNumber evidence="1">2.7.8.7</ecNumber>
    </recommendedName>
    <alternativeName>
        <fullName evidence="1">4'-phosphopantetheinyl transferase AcpS</fullName>
    </alternativeName>
</protein>
<dbReference type="EC" id="2.7.8.7" evidence="1"/>
<dbReference type="EMBL" id="CP000407">
    <property type="protein sequence ID" value="ABP90779.1"/>
    <property type="molecule type" value="Genomic_DNA"/>
</dbReference>
<dbReference type="SMR" id="A4VXE0"/>
<dbReference type="STRING" id="391295.SSU05_1813"/>
<dbReference type="KEGG" id="ssu:SSU05_1813"/>
<dbReference type="eggNOG" id="COG0736">
    <property type="taxonomic scope" value="Bacteria"/>
</dbReference>
<dbReference type="HOGENOM" id="CLU_089696_1_2_9"/>
<dbReference type="GO" id="GO:0005737">
    <property type="term" value="C:cytoplasm"/>
    <property type="evidence" value="ECO:0007669"/>
    <property type="project" value="UniProtKB-SubCell"/>
</dbReference>
<dbReference type="GO" id="GO:0008897">
    <property type="term" value="F:holo-[acyl-carrier-protein] synthase activity"/>
    <property type="evidence" value="ECO:0007669"/>
    <property type="project" value="UniProtKB-UniRule"/>
</dbReference>
<dbReference type="GO" id="GO:0000287">
    <property type="term" value="F:magnesium ion binding"/>
    <property type="evidence" value="ECO:0007669"/>
    <property type="project" value="UniProtKB-UniRule"/>
</dbReference>
<dbReference type="GO" id="GO:0006633">
    <property type="term" value="P:fatty acid biosynthetic process"/>
    <property type="evidence" value="ECO:0007669"/>
    <property type="project" value="UniProtKB-UniRule"/>
</dbReference>
<dbReference type="Gene3D" id="3.90.470.20">
    <property type="entry name" value="4'-phosphopantetheinyl transferase domain"/>
    <property type="match status" value="1"/>
</dbReference>
<dbReference type="HAMAP" id="MF_00101">
    <property type="entry name" value="AcpS"/>
    <property type="match status" value="1"/>
</dbReference>
<dbReference type="InterPro" id="IPR008278">
    <property type="entry name" value="4-PPantetheinyl_Trfase_dom"/>
</dbReference>
<dbReference type="InterPro" id="IPR037143">
    <property type="entry name" value="4-PPantetheinyl_Trfase_dom_sf"/>
</dbReference>
<dbReference type="InterPro" id="IPR002582">
    <property type="entry name" value="ACPS"/>
</dbReference>
<dbReference type="InterPro" id="IPR004568">
    <property type="entry name" value="Ppantetheine-prot_Trfase_dom"/>
</dbReference>
<dbReference type="NCBIfam" id="TIGR00516">
    <property type="entry name" value="acpS"/>
    <property type="match status" value="1"/>
</dbReference>
<dbReference type="NCBIfam" id="TIGR00556">
    <property type="entry name" value="pantethn_trn"/>
    <property type="match status" value="1"/>
</dbReference>
<dbReference type="Pfam" id="PF01648">
    <property type="entry name" value="ACPS"/>
    <property type="match status" value="1"/>
</dbReference>
<dbReference type="SUPFAM" id="SSF56214">
    <property type="entry name" value="4'-phosphopantetheinyl transferase"/>
    <property type="match status" value="1"/>
</dbReference>
<evidence type="ECO:0000255" key="1">
    <source>
        <dbReference type="HAMAP-Rule" id="MF_00101"/>
    </source>
</evidence>
<accession>A4VXE0</accession>